<protein>
    <recommendedName>
        <fullName evidence="1">ATP-dependent Clp protease adapter protein ClpS</fullName>
    </recommendedName>
</protein>
<reference key="1">
    <citation type="submission" date="2006-08" db="EMBL/GenBank/DDBJ databases">
        <title>Complete sequence of Shewanella sp. MR-4.</title>
        <authorList>
            <consortium name="US DOE Joint Genome Institute"/>
            <person name="Copeland A."/>
            <person name="Lucas S."/>
            <person name="Lapidus A."/>
            <person name="Barry K."/>
            <person name="Detter J.C."/>
            <person name="Glavina del Rio T."/>
            <person name="Hammon N."/>
            <person name="Israni S."/>
            <person name="Dalin E."/>
            <person name="Tice H."/>
            <person name="Pitluck S."/>
            <person name="Kiss H."/>
            <person name="Brettin T."/>
            <person name="Bruce D."/>
            <person name="Han C."/>
            <person name="Tapia R."/>
            <person name="Gilna P."/>
            <person name="Schmutz J."/>
            <person name="Larimer F."/>
            <person name="Land M."/>
            <person name="Hauser L."/>
            <person name="Kyrpides N."/>
            <person name="Mikhailova N."/>
            <person name="Nealson K."/>
            <person name="Konstantinidis K."/>
            <person name="Klappenbach J."/>
            <person name="Tiedje J."/>
            <person name="Richardson P."/>
        </authorList>
    </citation>
    <scope>NUCLEOTIDE SEQUENCE [LARGE SCALE GENOMIC DNA]</scope>
    <source>
        <strain>MR-4</strain>
    </source>
</reference>
<sequence>MGKTGNIEHVEERVESELMPPSMYKVILNNDDYTPMDFVIEVLQIFFRKNEQEATDIMLTIHHQGKGICGIFPYGIAETKVIQVNQFARQNQHPLLCSLEKA</sequence>
<dbReference type="EMBL" id="CP000446">
    <property type="protein sequence ID" value="ABI38723.1"/>
    <property type="molecule type" value="Genomic_DNA"/>
</dbReference>
<dbReference type="RefSeq" id="WP_011622425.1">
    <property type="nucleotide sequence ID" value="NC_008321.1"/>
</dbReference>
<dbReference type="SMR" id="Q0HJP4"/>
<dbReference type="GeneID" id="94727743"/>
<dbReference type="KEGG" id="she:Shewmr4_1647"/>
<dbReference type="HOGENOM" id="CLU_134358_2_1_6"/>
<dbReference type="GO" id="GO:0030163">
    <property type="term" value="P:protein catabolic process"/>
    <property type="evidence" value="ECO:0007669"/>
    <property type="project" value="InterPro"/>
</dbReference>
<dbReference type="GO" id="GO:0006508">
    <property type="term" value="P:proteolysis"/>
    <property type="evidence" value="ECO:0007669"/>
    <property type="project" value="UniProtKB-UniRule"/>
</dbReference>
<dbReference type="FunFam" id="3.30.1390.10:FF:000002">
    <property type="entry name" value="ATP-dependent Clp protease adapter protein ClpS"/>
    <property type="match status" value="1"/>
</dbReference>
<dbReference type="Gene3D" id="3.30.1390.10">
    <property type="match status" value="1"/>
</dbReference>
<dbReference type="HAMAP" id="MF_00302">
    <property type="entry name" value="ClpS"/>
    <property type="match status" value="1"/>
</dbReference>
<dbReference type="InterPro" id="IPR022935">
    <property type="entry name" value="ClpS"/>
</dbReference>
<dbReference type="InterPro" id="IPR003769">
    <property type="entry name" value="ClpS_core"/>
</dbReference>
<dbReference type="InterPro" id="IPR014719">
    <property type="entry name" value="Ribosomal_bL12_C/ClpS-like"/>
</dbReference>
<dbReference type="NCBIfam" id="NF000670">
    <property type="entry name" value="PRK00033.1-3"/>
    <property type="match status" value="1"/>
</dbReference>
<dbReference type="NCBIfam" id="NF000672">
    <property type="entry name" value="PRK00033.1-5"/>
    <property type="match status" value="1"/>
</dbReference>
<dbReference type="PANTHER" id="PTHR33473:SF19">
    <property type="entry name" value="ATP-DEPENDENT CLP PROTEASE ADAPTER PROTEIN CLPS"/>
    <property type="match status" value="1"/>
</dbReference>
<dbReference type="PANTHER" id="PTHR33473">
    <property type="entry name" value="ATP-DEPENDENT CLP PROTEASE ADAPTER PROTEIN CLPS1, CHLOROPLASTIC"/>
    <property type="match status" value="1"/>
</dbReference>
<dbReference type="Pfam" id="PF02617">
    <property type="entry name" value="ClpS"/>
    <property type="match status" value="1"/>
</dbReference>
<dbReference type="SUPFAM" id="SSF54736">
    <property type="entry name" value="ClpS-like"/>
    <property type="match status" value="1"/>
</dbReference>
<name>CLPS_SHESM</name>
<accession>Q0HJP4</accession>
<evidence type="ECO:0000255" key="1">
    <source>
        <dbReference type="HAMAP-Rule" id="MF_00302"/>
    </source>
</evidence>
<comment type="function">
    <text evidence="1">Involved in the modulation of the specificity of the ClpAP-mediated ATP-dependent protein degradation.</text>
</comment>
<comment type="subunit">
    <text evidence="1">Binds to the N-terminal domain of the chaperone ClpA.</text>
</comment>
<comment type="similarity">
    <text evidence="1">Belongs to the ClpS family.</text>
</comment>
<organism>
    <name type="scientific">Shewanella sp. (strain MR-4)</name>
    <dbReference type="NCBI Taxonomy" id="60480"/>
    <lineage>
        <taxon>Bacteria</taxon>
        <taxon>Pseudomonadati</taxon>
        <taxon>Pseudomonadota</taxon>
        <taxon>Gammaproteobacteria</taxon>
        <taxon>Alteromonadales</taxon>
        <taxon>Shewanellaceae</taxon>
        <taxon>Shewanella</taxon>
    </lineage>
</organism>
<gene>
    <name evidence="1" type="primary">clpS</name>
    <name type="ordered locus">Shewmr4_1647</name>
</gene>
<proteinExistence type="inferred from homology"/>
<feature type="chain" id="PRO_1000022629" description="ATP-dependent Clp protease adapter protein ClpS">
    <location>
        <begin position="1"/>
        <end position="102"/>
    </location>
</feature>